<feature type="signal peptide" evidence="1">
    <location>
        <begin position="1"/>
        <end position="22"/>
    </location>
</feature>
<feature type="chain" id="PRO_5015320111" description="Oocyte-secreted protein 3" evidence="1">
    <location>
        <begin position="23"/>
        <end position="193"/>
    </location>
</feature>
<feature type="glycosylation site" description="N-linked (GlcNAc...) asparagine" evidence="2">
    <location>
        <position position="64"/>
    </location>
</feature>
<feature type="glycosylation site" description="N-linked (GlcNAc...) asparagine" evidence="2">
    <location>
        <position position="130"/>
    </location>
</feature>
<feature type="glycosylation site" description="N-linked (GlcNAc...) asparagine" evidence="2">
    <location>
        <position position="148"/>
    </location>
</feature>
<feature type="glycosylation site" description="N-linked (GlcNAc...) asparagine" evidence="2">
    <location>
        <position position="151"/>
    </location>
</feature>
<feature type="glycosylation site" description="N-linked (GlcNAc...) asparagine" evidence="2">
    <location>
        <position position="165"/>
    </location>
</feature>
<feature type="glycosylation site" description="N-linked (GlcNAc...) asparagine" evidence="2">
    <location>
        <position position="178"/>
    </location>
</feature>
<comment type="subcellular location">
    <subcellularLocation>
        <location evidence="3">Secreted</location>
    </subcellularLocation>
</comment>
<comment type="similarity">
    <text evidence="3">Belongs to the PLAC1 family.</text>
</comment>
<accession>A0A2R8YFM6</accession>
<gene>
    <name evidence="4" type="primary">OOSP3</name>
</gene>
<organism>
    <name type="scientific">Homo sapiens</name>
    <name type="common">Human</name>
    <dbReference type="NCBI Taxonomy" id="9606"/>
    <lineage>
        <taxon>Eukaryota</taxon>
        <taxon>Metazoa</taxon>
        <taxon>Chordata</taxon>
        <taxon>Craniata</taxon>
        <taxon>Vertebrata</taxon>
        <taxon>Euteleostomi</taxon>
        <taxon>Mammalia</taxon>
        <taxon>Eutheria</taxon>
        <taxon>Euarchontoglires</taxon>
        <taxon>Primates</taxon>
        <taxon>Haplorrhini</taxon>
        <taxon>Catarrhini</taxon>
        <taxon>Hominidae</taxon>
        <taxon>Homo</taxon>
    </lineage>
</organism>
<protein>
    <recommendedName>
        <fullName evidence="3">Oocyte-secreted protein 3</fullName>
    </recommendedName>
</protein>
<proteinExistence type="inferred from homology"/>
<sequence length="193" mass="21194">MKDFVRLQSSFLLCTILTLSEQESVSVGCTSSMFWVVAEPTLLGQDHILHSDEASLGTGCPVTNVTAKGYEFNYPATQCGIQKEVFSYVTVFYSALHCNIMHKGVTGKIPLMCIVYGSSLDTTSSTIHNNLTEFQNDPPATNSYSPWNLTNASLFGLTRIPYFQNSSVEASHQSLLLNMSHPLVHESANVAIF</sequence>
<evidence type="ECO:0000255" key="1"/>
<evidence type="ECO:0000255" key="2">
    <source>
        <dbReference type="PROSITE-ProRule" id="PRU00498"/>
    </source>
</evidence>
<evidence type="ECO:0000305" key="3"/>
<evidence type="ECO:0000312" key="4">
    <source>
        <dbReference type="HGNC" id="HGNC:53903"/>
    </source>
</evidence>
<keyword id="KW-0325">Glycoprotein</keyword>
<keyword id="KW-1185">Reference proteome</keyword>
<keyword id="KW-0964">Secreted</keyword>
<keyword id="KW-0732">Signal</keyword>
<name>OOSP3_HUMAN</name>
<reference key="1">
    <citation type="journal article" date="2006" name="Nature">
        <title>Human chromosome 11 DNA sequence and analysis including novel gene identification.</title>
        <authorList>
            <person name="Taylor T.D."/>
            <person name="Noguchi H."/>
            <person name="Totoki Y."/>
            <person name="Toyoda A."/>
            <person name="Kuroki Y."/>
            <person name="Dewar K."/>
            <person name="Lloyd C."/>
            <person name="Itoh T."/>
            <person name="Takeda T."/>
            <person name="Kim D.-W."/>
            <person name="She X."/>
            <person name="Barlow K.F."/>
            <person name="Bloom T."/>
            <person name="Bruford E."/>
            <person name="Chang J.L."/>
            <person name="Cuomo C.A."/>
            <person name="Eichler E."/>
            <person name="FitzGerald M.G."/>
            <person name="Jaffe D.B."/>
            <person name="LaButti K."/>
            <person name="Nicol R."/>
            <person name="Park H.-S."/>
            <person name="Seaman C."/>
            <person name="Sougnez C."/>
            <person name="Yang X."/>
            <person name="Zimmer A.R."/>
            <person name="Zody M.C."/>
            <person name="Birren B.W."/>
            <person name="Nusbaum C."/>
            <person name="Fujiyama A."/>
            <person name="Hattori M."/>
            <person name="Rogers J."/>
            <person name="Lander E.S."/>
            <person name="Sakaki Y."/>
        </authorList>
    </citation>
    <scope>NUCLEOTIDE SEQUENCE [LARGE SCALE GENOMIC DNA]</scope>
</reference>
<dbReference type="EMBL" id="AP002347">
    <property type="status" value="NOT_ANNOTATED_CDS"/>
    <property type="molecule type" value="Genomic_DNA"/>
</dbReference>
<dbReference type="CCDS" id="CCDS91477.1"/>
<dbReference type="RefSeq" id="NP_001382184.1">
    <property type="nucleotide sequence ID" value="NM_001395255.1"/>
</dbReference>
<dbReference type="SMR" id="A0A2R8YFM6"/>
<dbReference type="STRING" id="9606.ENSP00000495263"/>
<dbReference type="GlyCosmos" id="A0A2R8YFM6">
    <property type="glycosylation" value="6 sites, No reported glycans"/>
</dbReference>
<dbReference type="GlyGen" id="A0A2R8YFM6">
    <property type="glycosylation" value="6 sites"/>
</dbReference>
<dbReference type="Ensembl" id="ENST00000646438.2">
    <property type="protein sequence ID" value="ENSP00000495263.1"/>
    <property type="gene ID" value="ENSG00000285231.2"/>
</dbReference>
<dbReference type="GeneID" id="112577461"/>
<dbReference type="MANE-Select" id="ENST00000646438.2">
    <property type="protein sequence ID" value="ENSP00000495263.1"/>
    <property type="RefSeq nucleotide sequence ID" value="NM_001395255.1"/>
    <property type="RefSeq protein sequence ID" value="NP_001382184.1"/>
</dbReference>
<dbReference type="AGR" id="HGNC:53903"/>
<dbReference type="GeneCards" id="OOSP3"/>
<dbReference type="HGNC" id="HGNC:53903">
    <property type="gene designation" value="OOSP3"/>
</dbReference>
<dbReference type="HPA" id="ENSG00000285231">
    <property type="expression patterns" value="Not detected"/>
</dbReference>
<dbReference type="MIM" id="621112">
    <property type="type" value="gene"/>
</dbReference>
<dbReference type="neXtProt" id="NX_A0A2R8YFM6"/>
<dbReference type="VEuPathDB" id="HostDB:ENSG00000285231"/>
<dbReference type="GeneTree" id="ENSGT00960000193305"/>
<dbReference type="InParanoid" id="A0A2R8YFM6"/>
<dbReference type="OMA" id="CIVYGSS"/>
<dbReference type="OrthoDB" id="9450704at2759"/>
<dbReference type="PAN-GO" id="A0A2R8YFM6">
    <property type="GO annotations" value="0 GO annotations based on evolutionary models"/>
</dbReference>
<dbReference type="Pharos" id="A0A2R8YFM6">
    <property type="development level" value="Tdark"/>
</dbReference>
<dbReference type="PRO" id="PR:A0A2R8YFM6"/>
<dbReference type="Proteomes" id="UP000005640">
    <property type="component" value="Chromosome 11"/>
</dbReference>
<dbReference type="Bgee" id="ENSG00000285231">
    <property type="expression patterns" value="Expressed in male germ line stem cell (sensu Vertebrata) in testis and 37 other cell types or tissues"/>
</dbReference>
<dbReference type="GO" id="GO:0005576">
    <property type="term" value="C:extracellular region"/>
    <property type="evidence" value="ECO:0007669"/>
    <property type="project" value="UniProtKB-SubCell"/>
</dbReference>
<dbReference type="InterPro" id="IPR033222">
    <property type="entry name" value="PLAC1_fam"/>
</dbReference>
<dbReference type="PANTHER" id="PTHR14380:SF10">
    <property type="entry name" value="OOCYTE-SECRETED PROTEIN 3"/>
    <property type="match status" value="1"/>
</dbReference>
<dbReference type="PANTHER" id="PTHR14380">
    <property type="entry name" value="PLACENTA-SPECIFIC PROTEIN 1"/>
    <property type="match status" value="1"/>
</dbReference>